<sequence>MISRHFTVLTALNLQTKIKICIRNFSIRGAMTKVNGNSNGNGISASTDLLDTPSAYTQKSNKTHTSIDLRSDTVTVPSVEMRRAMAEAIVGDDVYGEDTTTNRLEQRCAELFGKEAGLFVTSGTMGNLLAIMAHCQRGEEIIVGRYNHIHRWEQGNYAQFAGISATTLEVKPDGTMDLNDIEQAIRVKDCHMPASKLICIENTHNYTGGKALPIEWMRSVKQLAERRDLKVHMDGARIYNAAVASNCSVSKIASFADTVQMCFSKGLGAPVGSIVVGPKDFIDRARHSRKALGGGWRQSGILAAAAHIALDHADATIRADHERAKTLARMINDATPEEFRTKVFAAEKDITNMVLVHCQNGVTVQQLTDFFQKHDILAMTFDARRIRMVLNWNVSDENLETIVEVYKKFLKQL</sequence>
<organism>
    <name type="scientific">Caenorhabditis elegans</name>
    <dbReference type="NCBI Taxonomy" id="6239"/>
    <lineage>
        <taxon>Eukaryota</taxon>
        <taxon>Metazoa</taxon>
        <taxon>Ecdysozoa</taxon>
        <taxon>Nematoda</taxon>
        <taxon>Chromadorea</taxon>
        <taxon>Rhabditida</taxon>
        <taxon>Rhabditina</taxon>
        <taxon>Rhabditomorpha</taxon>
        <taxon>Rhabditoidea</taxon>
        <taxon>Rhabditidae</taxon>
        <taxon>Peloderinae</taxon>
        <taxon>Caenorhabditis</taxon>
    </lineage>
</organism>
<evidence type="ECO:0000250" key="1"/>
<evidence type="ECO:0000305" key="2"/>
<name>YF64_CAEEL</name>
<gene>
    <name type="ORF">R102.4</name>
</gene>
<keyword id="KW-0025">Alternative splicing</keyword>
<keyword id="KW-0456">Lyase</keyword>
<keyword id="KW-0663">Pyridoxal phosphate</keyword>
<keyword id="KW-1185">Reference proteome</keyword>
<dbReference type="EMBL" id="Z70309">
    <property type="protein sequence ID" value="CAB54291.3"/>
    <property type="molecule type" value="Genomic_DNA"/>
</dbReference>
<dbReference type="EMBL" id="Z70309">
    <property type="protein sequence ID" value="CAB54293.3"/>
    <property type="molecule type" value="Genomic_DNA"/>
</dbReference>
<dbReference type="EMBL" id="Z70309">
    <property type="protein sequence ID" value="CAL36512.2"/>
    <property type="molecule type" value="Genomic_DNA"/>
</dbReference>
<dbReference type="PIR" id="D88817">
    <property type="entry name" value="D88817"/>
</dbReference>
<dbReference type="PIR" id="T24106">
    <property type="entry name" value="T24106"/>
</dbReference>
<dbReference type="PIR" id="T24108">
    <property type="entry name" value="T24108"/>
</dbReference>
<dbReference type="RefSeq" id="NP_001076701.2">
    <molecule id="Q21890-3"/>
    <property type="nucleotide sequence ID" value="NM_001083232.5"/>
</dbReference>
<dbReference type="RefSeq" id="NP_501978.3">
    <molecule id="Q21890-2"/>
    <property type="nucleotide sequence ID" value="NM_069577.6"/>
</dbReference>
<dbReference type="RefSeq" id="NP_501979.3">
    <molecule id="Q21890-1"/>
    <property type="nucleotide sequence ID" value="NM_069578.8"/>
</dbReference>
<dbReference type="SMR" id="Q21890"/>
<dbReference type="BioGRID" id="43062">
    <property type="interactions" value="1"/>
</dbReference>
<dbReference type="FunCoup" id="Q21890">
    <property type="interactions" value="307"/>
</dbReference>
<dbReference type="STRING" id="6239.R102.4b.1"/>
<dbReference type="PaxDb" id="6239-R102.4b"/>
<dbReference type="EnsemblMetazoa" id="R102.4a.1">
    <molecule id="Q21890-2"/>
    <property type="protein sequence ID" value="R102.4a.1"/>
    <property type="gene ID" value="WBGene00011291"/>
</dbReference>
<dbReference type="EnsemblMetazoa" id="R102.4a.2">
    <molecule id="Q21890-2"/>
    <property type="protein sequence ID" value="R102.4a.2"/>
    <property type="gene ID" value="WBGene00011291"/>
</dbReference>
<dbReference type="EnsemblMetazoa" id="R102.4b.1">
    <molecule id="Q21890-1"/>
    <property type="protein sequence ID" value="R102.4b.1"/>
    <property type="gene ID" value="WBGene00011291"/>
</dbReference>
<dbReference type="EnsemblMetazoa" id="R102.4c.1">
    <molecule id="Q21890-3"/>
    <property type="protein sequence ID" value="R102.4c.1"/>
    <property type="gene ID" value="WBGene00011291"/>
</dbReference>
<dbReference type="GeneID" id="177961"/>
<dbReference type="KEGG" id="cel:CELE_R102.4"/>
<dbReference type="UCSC" id="R102.4b">
    <molecule id="Q21890-1"/>
    <property type="organism name" value="c. elegans"/>
</dbReference>
<dbReference type="AGR" id="WB:WBGene00011291"/>
<dbReference type="CTD" id="177961"/>
<dbReference type="WormBase" id="R102.4a">
    <molecule id="Q21890-2"/>
    <property type="protein sequence ID" value="CE41252"/>
    <property type="gene ID" value="WBGene00011291"/>
</dbReference>
<dbReference type="WormBase" id="R102.4b">
    <molecule id="Q21890-1"/>
    <property type="protein sequence ID" value="CE41253"/>
    <property type="gene ID" value="WBGene00011291"/>
</dbReference>
<dbReference type="WormBase" id="R102.4c">
    <molecule id="Q21890-3"/>
    <property type="protein sequence ID" value="CE41254"/>
    <property type="gene ID" value="WBGene00011291"/>
</dbReference>
<dbReference type="eggNOG" id="KOG1368">
    <property type="taxonomic scope" value="Eukaryota"/>
</dbReference>
<dbReference type="GeneTree" id="ENSGT00390000014681"/>
<dbReference type="InParanoid" id="Q21890"/>
<dbReference type="OMA" id="MRQTGFM"/>
<dbReference type="OrthoDB" id="10261951at2759"/>
<dbReference type="PhylomeDB" id="Q21890"/>
<dbReference type="PRO" id="PR:Q21890"/>
<dbReference type="Proteomes" id="UP000001940">
    <property type="component" value="Chromosome IV"/>
</dbReference>
<dbReference type="Bgee" id="WBGene00011291">
    <property type="expression patterns" value="Expressed in material anatomical entity and 5 other cell types or tissues"/>
</dbReference>
<dbReference type="ExpressionAtlas" id="Q21890">
    <property type="expression patterns" value="baseline and differential"/>
</dbReference>
<dbReference type="GO" id="GO:0005829">
    <property type="term" value="C:cytosol"/>
    <property type="evidence" value="ECO:0000318"/>
    <property type="project" value="GO_Central"/>
</dbReference>
<dbReference type="GO" id="GO:0008732">
    <property type="term" value="F:L-allo-threonine aldolase activity"/>
    <property type="evidence" value="ECO:0000318"/>
    <property type="project" value="GO_Central"/>
</dbReference>
<dbReference type="GO" id="GO:0006545">
    <property type="term" value="P:glycine biosynthetic process"/>
    <property type="evidence" value="ECO:0000318"/>
    <property type="project" value="GO_Central"/>
</dbReference>
<dbReference type="GO" id="GO:0006567">
    <property type="term" value="P:threonine catabolic process"/>
    <property type="evidence" value="ECO:0000318"/>
    <property type="project" value="GO_Central"/>
</dbReference>
<dbReference type="FunFam" id="3.90.1150.10:FF:000161">
    <property type="entry name" value="Threonine aldolase"/>
    <property type="match status" value="1"/>
</dbReference>
<dbReference type="FunFam" id="3.40.640.10:FF:000159">
    <property type="entry name" value="Uncharacterized protein R102.4"/>
    <property type="match status" value="1"/>
</dbReference>
<dbReference type="Gene3D" id="3.90.1150.10">
    <property type="entry name" value="Aspartate Aminotransferase, domain 1"/>
    <property type="match status" value="1"/>
</dbReference>
<dbReference type="Gene3D" id="3.40.640.10">
    <property type="entry name" value="Type I PLP-dependent aspartate aminotransferase-like (Major domain)"/>
    <property type="match status" value="1"/>
</dbReference>
<dbReference type="InterPro" id="IPR001597">
    <property type="entry name" value="ArAA_b-elim_lyase/Thr_aldolase"/>
</dbReference>
<dbReference type="InterPro" id="IPR023603">
    <property type="entry name" value="Low_specificity_L-TA-like"/>
</dbReference>
<dbReference type="InterPro" id="IPR015424">
    <property type="entry name" value="PyrdxlP-dep_Trfase"/>
</dbReference>
<dbReference type="InterPro" id="IPR015421">
    <property type="entry name" value="PyrdxlP-dep_Trfase_major"/>
</dbReference>
<dbReference type="InterPro" id="IPR015422">
    <property type="entry name" value="PyrdxlP-dep_Trfase_small"/>
</dbReference>
<dbReference type="NCBIfam" id="NF041359">
    <property type="entry name" value="GntG_guanitoxin"/>
    <property type="match status" value="1"/>
</dbReference>
<dbReference type="NCBIfam" id="NF007825">
    <property type="entry name" value="PRK10534.1"/>
    <property type="match status" value="1"/>
</dbReference>
<dbReference type="PANTHER" id="PTHR48097:SF9">
    <property type="entry name" value="L-THREONINE ALDOLASE"/>
    <property type="match status" value="1"/>
</dbReference>
<dbReference type="PANTHER" id="PTHR48097">
    <property type="entry name" value="L-THREONINE ALDOLASE-RELATED"/>
    <property type="match status" value="1"/>
</dbReference>
<dbReference type="Pfam" id="PF01212">
    <property type="entry name" value="Beta_elim_lyase"/>
    <property type="match status" value="1"/>
</dbReference>
<dbReference type="PIRSF" id="PIRSF017617">
    <property type="entry name" value="Thr_aldolase"/>
    <property type="match status" value="1"/>
</dbReference>
<dbReference type="SUPFAM" id="SSF53383">
    <property type="entry name" value="PLP-dependent transferases"/>
    <property type="match status" value="1"/>
</dbReference>
<reference key="1">
    <citation type="journal article" date="1998" name="Science">
        <title>Genome sequence of the nematode C. elegans: a platform for investigating biology.</title>
        <authorList>
            <consortium name="The C. elegans sequencing consortium"/>
        </authorList>
    </citation>
    <scope>NUCLEOTIDE SEQUENCE [LARGE SCALE GENOMIC DNA]</scope>
    <scope>ALTERNATIVE SPLICING</scope>
    <source>
        <strain>Bristol N2</strain>
    </source>
</reference>
<feature type="chain" id="PRO_0000121579" description="Uncharacterized protein R102.4">
    <location>
        <begin position="1"/>
        <end position="413"/>
    </location>
</feature>
<feature type="modified residue" description="N6-(pyridoxal phosphate)lysine" evidence="1">
    <location>
        <position position="265"/>
    </location>
</feature>
<feature type="splice variant" id="VSP_028794" description="In isoform c." evidence="2">
    <location>
        <begin position="1"/>
        <end position="30"/>
    </location>
</feature>
<feature type="splice variant" id="VSP_011905" description="In isoform a." evidence="2">
    <original>MISRHFTVLTALNLQTKIKI</original>
    <variation>MYSLLTRRVIVLGNV</variation>
    <location>
        <begin position="1"/>
        <end position="20"/>
    </location>
</feature>
<comment type="cofactor">
    <cofactor evidence="1">
        <name>pyridoxal 5'-phosphate</name>
        <dbReference type="ChEBI" id="CHEBI:597326"/>
    </cofactor>
</comment>
<comment type="alternative products">
    <event type="alternative splicing"/>
    <isoform>
        <id>Q21890-1</id>
        <name>b</name>
        <sequence type="displayed"/>
    </isoform>
    <isoform>
        <id>Q21890-2</id>
        <name>a</name>
        <sequence type="described" ref="VSP_011905"/>
    </isoform>
    <isoform>
        <id>Q21890-3</id>
        <name>c</name>
        <sequence type="described" ref="VSP_028794"/>
    </isoform>
</comment>
<comment type="similarity">
    <text evidence="2">Belongs to the threonine aldolase family.</text>
</comment>
<proteinExistence type="inferred from homology"/>
<accession>Q21890</accession>
<accession>Q0G823</accession>
<accession>Q8T8M5</accession>
<accession>Q8T8M6</accession>
<protein>
    <recommendedName>
        <fullName>Uncharacterized protein R102.4</fullName>
    </recommendedName>
</protein>